<gene>
    <name type="primary">Dnajc7</name>
    <name type="synonym">Ttc2</name>
</gene>
<evidence type="ECO:0000250" key="1"/>
<evidence type="ECO:0000250" key="2">
    <source>
        <dbReference type="UniProtKB" id="Q99615"/>
    </source>
</evidence>
<evidence type="ECO:0000255" key="3">
    <source>
        <dbReference type="PROSITE-ProRule" id="PRU00286"/>
    </source>
</evidence>
<evidence type="ECO:0000269" key="4">
    <source>
    </source>
</evidence>
<evidence type="ECO:0000305" key="5"/>
<organism>
    <name type="scientific">Mus musculus</name>
    <name type="common">Mouse</name>
    <dbReference type="NCBI Taxonomy" id="10090"/>
    <lineage>
        <taxon>Eukaryota</taxon>
        <taxon>Metazoa</taxon>
        <taxon>Chordata</taxon>
        <taxon>Craniata</taxon>
        <taxon>Vertebrata</taxon>
        <taxon>Euteleostomi</taxon>
        <taxon>Mammalia</taxon>
        <taxon>Eutheria</taxon>
        <taxon>Euarchontoglires</taxon>
        <taxon>Glires</taxon>
        <taxon>Rodentia</taxon>
        <taxon>Myomorpha</taxon>
        <taxon>Muroidea</taxon>
        <taxon>Muridae</taxon>
        <taxon>Murinae</taxon>
        <taxon>Mus</taxon>
        <taxon>Mus</taxon>
    </lineage>
</organism>
<accession>Q9QYI3</accession>
<accession>Q3TKR1</accession>
<accession>Q6VVW6</accession>
<accession>Q8BPG3</accession>
<accession>Q8CIL2</accession>
<accession>Q9CT29</accession>
<accession>Q9D026</accession>
<sequence length="494" mass="56476">MAATAECDVVMAATEPELLEDEDAKREAESFKEQGNAYYAKKDYNEAYNYYTKAIDMCPNNASYYGNRAATLMMLGRFREALGDAQQSVRLDDSFVRGHLREGKCHLSLGNAMAACRSFQRALELDHKNAQAQQEFKNANAVMEYEKIAEVDFEKRDFRKVVFCMDRALEFAPACHRFKILKAECLAMLGRYPEAQFVASDILRMDSTNADALYVRGLCLYYEDCIEKAVQFFVQALRMAPDHEKACVACRNAKALKAKKEDGNKAFKEGNYKLAYELYTEALGIDPNNIKTNAKLYCNRGTVNSKLRQLEDAIEDCTNAVKLDDTYIKAYLRRAQCYMDTEQFEEAVRDYEKVYQTEKTKEHKQLLKNAQLELKKSKRKDYYKILGVDKNASEDEIKKAYRKRALMHHPDRHSGASAEVQKEEEKKFKEVGEAFTILSDPKKKTRYDSGQDLDEEGMNMGDFDANNIFKAFFGGPGGFSFEASGPGNFYFQFG</sequence>
<name>DNJC7_MOUSE</name>
<dbReference type="EMBL" id="AB028861">
    <property type="protein sequence ID" value="BAA88309.1"/>
    <property type="molecule type" value="mRNA"/>
</dbReference>
<dbReference type="EMBL" id="AK011384">
    <property type="protein sequence ID" value="BAB27584.1"/>
    <property type="molecule type" value="mRNA"/>
</dbReference>
<dbReference type="EMBL" id="AK011875">
    <property type="protein sequence ID" value="BAB27893.1"/>
    <property type="molecule type" value="mRNA"/>
</dbReference>
<dbReference type="EMBL" id="AK076032">
    <property type="protein sequence ID" value="BAC36133.1"/>
    <property type="molecule type" value="mRNA"/>
</dbReference>
<dbReference type="EMBL" id="AK145506">
    <property type="protein sequence ID" value="BAE26476.1"/>
    <property type="molecule type" value="mRNA"/>
</dbReference>
<dbReference type="EMBL" id="AK166872">
    <property type="protein sequence ID" value="BAE39083.1"/>
    <property type="molecule type" value="mRNA"/>
</dbReference>
<dbReference type="EMBL" id="AY323828">
    <property type="protein sequence ID" value="AAQ91291.1"/>
    <property type="molecule type" value="mRNA"/>
</dbReference>
<dbReference type="EMBL" id="BC023681">
    <property type="protein sequence ID" value="AAH23681.1"/>
    <property type="molecule type" value="mRNA"/>
</dbReference>
<dbReference type="EMBL" id="BC055729">
    <property type="protein sequence ID" value="AAH55729.1"/>
    <property type="molecule type" value="mRNA"/>
</dbReference>
<dbReference type="CCDS" id="CCDS25428.1"/>
<dbReference type="RefSeq" id="NP_001390532.1">
    <property type="nucleotide sequence ID" value="NM_001403603.1"/>
</dbReference>
<dbReference type="RefSeq" id="NP_062769.2">
    <property type="nucleotide sequence ID" value="NM_019795.4"/>
</dbReference>
<dbReference type="SMR" id="Q9QYI3"/>
<dbReference type="BioGRID" id="207919">
    <property type="interactions" value="20"/>
</dbReference>
<dbReference type="FunCoup" id="Q9QYI3">
    <property type="interactions" value="4248"/>
</dbReference>
<dbReference type="IntAct" id="Q9QYI3">
    <property type="interactions" value="2"/>
</dbReference>
<dbReference type="MINT" id="Q9QYI3"/>
<dbReference type="STRING" id="10090.ENSMUSP00000014339"/>
<dbReference type="GlyGen" id="Q9QYI3">
    <property type="glycosylation" value="2 sites, 1 N-linked glycan (1 site), 1 O-linked glycan (1 site)"/>
</dbReference>
<dbReference type="iPTMnet" id="Q9QYI3"/>
<dbReference type="PhosphoSitePlus" id="Q9QYI3"/>
<dbReference type="REPRODUCTION-2DPAGE" id="Q9QYI3"/>
<dbReference type="PaxDb" id="10090-ENSMUSP00000014339"/>
<dbReference type="ProteomicsDB" id="279746"/>
<dbReference type="Pumba" id="Q9QYI3"/>
<dbReference type="Antibodypedia" id="8072">
    <property type="antibodies" value="225 antibodies from 28 providers"/>
</dbReference>
<dbReference type="DNASU" id="56354"/>
<dbReference type="Ensembl" id="ENSMUST00000014339.15">
    <property type="protein sequence ID" value="ENSMUSP00000014339.9"/>
    <property type="gene ID" value="ENSMUSG00000014195.17"/>
</dbReference>
<dbReference type="GeneID" id="56354"/>
<dbReference type="KEGG" id="mmu:56354"/>
<dbReference type="UCSC" id="uc007lls.1">
    <property type="organism name" value="mouse"/>
</dbReference>
<dbReference type="AGR" id="MGI:1928373"/>
<dbReference type="CTD" id="7266"/>
<dbReference type="MGI" id="MGI:1928373">
    <property type="gene designation" value="Dnajc7"/>
</dbReference>
<dbReference type="VEuPathDB" id="HostDB:ENSMUSG00000014195"/>
<dbReference type="eggNOG" id="KOG0550">
    <property type="taxonomic scope" value="Eukaryota"/>
</dbReference>
<dbReference type="GeneTree" id="ENSGT00940000155338"/>
<dbReference type="HOGENOM" id="CLU_015935_3_1_1"/>
<dbReference type="InParanoid" id="Q9QYI3"/>
<dbReference type="OMA" id="KMCLGLD"/>
<dbReference type="PhylomeDB" id="Q9QYI3"/>
<dbReference type="TreeFam" id="TF105166"/>
<dbReference type="BioGRID-ORCS" id="56354">
    <property type="hits" value="5 hits in 78 CRISPR screens"/>
</dbReference>
<dbReference type="ChiTaRS" id="Dnajc7">
    <property type="organism name" value="mouse"/>
</dbReference>
<dbReference type="PRO" id="PR:Q9QYI3"/>
<dbReference type="Proteomes" id="UP000000589">
    <property type="component" value="Chromosome 11"/>
</dbReference>
<dbReference type="RNAct" id="Q9QYI3">
    <property type="molecule type" value="protein"/>
</dbReference>
<dbReference type="Bgee" id="ENSMUSG00000014195">
    <property type="expression patterns" value="Expressed in floor plate of midbrain and 269 other cell types or tissues"/>
</dbReference>
<dbReference type="ExpressionAtlas" id="Q9QYI3">
    <property type="expression patterns" value="baseline and differential"/>
</dbReference>
<dbReference type="GO" id="GO:0005856">
    <property type="term" value="C:cytoskeleton"/>
    <property type="evidence" value="ECO:0007669"/>
    <property type="project" value="UniProtKB-SubCell"/>
</dbReference>
<dbReference type="GO" id="GO:0005829">
    <property type="term" value="C:cytosol"/>
    <property type="evidence" value="ECO:0007669"/>
    <property type="project" value="Ensembl"/>
</dbReference>
<dbReference type="GO" id="GO:0005654">
    <property type="term" value="C:nucleoplasm"/>
    <property type="evidence" value="ECO:0007669"/>
    <property type="project" value="Ensembl"/>
</dbReference>
<dbReference type="GO" id="GO:0031072">
    <property type="term" value="F:heat shock protein binding"/>
    <property type="evidence" value="ECO:0007669"/>
    <property type="project" value="Ensembl"/>
</dbReference>
<dbReference type="GO" id="GO:0051085">
    <property type="term" value="P:chaperone cofactor-dependent protein refolding"/>
    <property type="evidence" value="ECO:0007669"/>
    <property type="project" value="Ensembl"/>
</dbReference>
<dbReference type="CDD" id="cd06257">
    <property type="entry name" value="DnaJ"/>
    <property type="match status" value="1"/>
</dbReference>
<dbReference type="FunFam" id="1.10.287.110:FF:000018">
    <property type="entry name" value="DnaJ (Hsp40) homolog, subfamily C, member 7"/>
    <property type="match status" value="1"/>
</dbReference>
<dbReference type="FunFam" id="1.25.40.10:FF:000097">
    <property type="entry name" value="DnaJ homolog subfamily C member 7 homolog"/>
    <property type="match status" value="1"/>
</dbReference>
<dbReference type="Gene3D" id="1.10.287.110">
    <property type="entry name" value="DnaJ domain"/>
    <property type="match status" value="1"/>
</dbReference>
<dbReference type="Gene3D" id="1.25.40.10">
    <property type="entry name" value="Tetratricopeptide repeat domain"/>
    <property type="match status" value="1"/>
</dbReference>
<dbReference type="InterPro" id="IPR001623">
    <property type="entry name" value="DnaJ_domain"/>
</dbReference>
<dbReference type="InterPro" id="IPR036869">
    <property type="entry name" value="J_dom_sf"/>
</dbReference>
<dbReference type="InterPro" id="IPR011990">
    <property type="entry name" value="TPR-like_helical_dom_sf"/>
</dbReference>
<dbReference type="InterPro" id="IPR019734">
    <property type="entry name" value="TPR_rpt"/>
</dbReference>
<dbReference type="PANTHER" id="PTHR45188:SF2">
    <property type="entry name" value="DNAJ HOMOLOG SUBFAMILY C MEMBER 7"/>
    <property type="match status" value="1"/>
</dbReference>
<dbReference type="PANTHER" id="PTHR45188">
    <property type="entry name" value="DNAJ PROTEIN P58IPK HOMOLOG"/>
    <property type="match status" value="1"/>
</dbReference>
<dbReference type="Pfam" id="PF00226">
    <property type="entry name" value="DnaJ"/>
    <property type="match status" value="1"/>
</dbReference>
<dbReference type="Pfam" id="PF13414">
    <property type="entry name" value="TPR_11"/>
    <property type="match status" value="1"/>
</dbReference>
<dbReference type="Pfam" id="PF13181">
    <property type="entry name" value="TPR_8"/>
    <property type="match status" value="2"/>
</dbReference>
<dbReference type="PRINTS" id="PR00625">
    <property type="entry name" value="JDOMAIN"/>
</dbReference>
<dbReference type="SMART" id="SM00271">
    <property type="entry name" value="DnaJ"/>
    <property type="match status" value="1"/>
</dbReference>
<dbReference type="SMART" id="SM00028">
    <property type="entry name" value="TPR"/>
    <property type="match status" value="8"/>
</dbReference>
<dbReference type="SUPFAM" id="SSF46565">
    <property type="entry name" value="Chaperone J-domain"/>
    <property type="match status" value="1"/>
</dbReference>
<dbReference type="SUPFAM" id="SSF48452">
    <property type="entry name" value="TPR-like"/>
    <property type="match status" value="2"/>
</dbReference>
<dbReference type="PROSITE" id="PS50076">
    <property type="entry name" value="DNAJ_2"/>
    <property type="match status" value="1"/>
</dbReference>
<dbReference type="PROSITE" id="PS50005">
    <property type="entry name" value="TPR"/>
    <property type="match status" value="8"/>
</dbReference>
<dbReference type="PROSITE" id="PS50293">
    <property type="entry name" value="TPR_REGION"/>
    <property type="match status" value="1"/>
</dbReference>
<proteinExistence type="evidence at protein level"/>
<keyword id="KW-0007">Acetylation</keyword>
<keyword id="KW-0143">Chaperone</keyword>
<keyword id="KW-0963">Cytoplasm</keyword>
<keyword id="KW-0206">Cytoskeleton</keyword>
<keyword id="KW-0539">Nucleus</keyword>
<keyword id="KW-0597">Phosphoprotein</keyword>
<keyword id="KW-1185">Reference proteome</keyword>
<keyword id="KW-0677">Repeat</keyword>
<keyword id="KW-0802">TPR repeat</keyword>
<comment type="function">
    <text evidence="1">Acts as a co-chaperone regulating the molecular chaperones HSP70 and HSP90 in folding of steroid receptors, such as the glucocorticoid receptor and the progesterone receptor. Proposed to act as a recycling chaperone by facilitating the return of chaperone substrates to early stages of chaperoning if further folding is required. In vitro, induces ATP-independent dissociation of HSP90 but not of HSP70 from the chaperone-substrate complexes (By similarity). Recruits NR1I3 to the cytoplasm.</text>
</comment>
<comment type="subunit">
    <text evidence="1">Associates with complexes containing chaperones HSP70 and HSP90. Interacts with the GAP domain of NF1. Interacts with HSP90AA1. Interacts with HSPA1A/B; the interaction is enhanced by ATP. Interacts with HSP90AB1. Interacts with PGR. Interacts with RAD9A; the interaction is interrupted by UV and heat shock treatments. Interacts with HUS1 and RAD1 (By similarity). Interacts with NR1I3; this complex may also include HSP90 Interacts with HSPA8 (By similarity).</text>
</comment>
<comment type="subcellular location">
    <subcellularLocation>
        <location evidence="4">Cytoplasm</location>
    </subcellularLocation>
    <subcellularLocation>
        <location evidence="2">Nucleus</location>
    </subcellularLocation>
    <subcellularLocation>
        <location evidence="4">Cytoplasm</location>
        <location evidence="4">Cytoskeleton</location>
    </subcellularLocation>
    <text evidence="4">Colocalizes with NR1I3 at microtubules.</text>
</comment>
<comment type="tissue specificity">
    <text evidence="4">Widely expressed with high levels in liver, skeletal muscle, kidney and testis.</text>
</comment>
<reference key="1">
    <citation type="journal article" date="2000" name="Cell Stress Chaperones">
        <title>Mammalian HSP40/DNAJ homologs: cloning of novel cDNAs and a proposal for their classification and nomenclature.</title>
        <authorList>
            <person name="Ohtsuka K."/>
            <person name="Hata M."/>
        </authorList>
    </citation>
    <scope>NUCLEOTIDE SEQUENCE [MRNA]</scope>
    <source>
        <strain>C3H/HeJ</strain>
    </source>
</reference>
<reference key="2">
    <citation type="journal article" date="2005" name="Science">
        <title>The transcriptional landscape of the mammalian genome.</title>
        <authorList>
            <person name="Carninci P."/>
            <person name="Kasukawa T."/>
            <person name="Katayama S."/>
            <person name="Gough J."/>
            <person name="Frith M.C."/>
            <person name="Maeda N."/>
            <person name="Oyama R."/>
            <person name="Ravasi T."/>
            <person name="Lenhard B."/>
            <person name="Wells C."/>
            <person name="Kodzius R."/>
            <person name="Shimokawa K."/>
            <person name="Bajic V.B."/>
            <person name="Brenner S.E."/>
            <person name="Batalov S."/>
            <person name="Forrest A.R."/>
            <person name="Zavolan M."/>
            <person name="Davis M.J."/>
            <person name="Wilming L.G."/>
            <person name="Aidinis V."/>
            <person name="Allen J.E."/>
            <person name="Ambesi-Impiombato A."/>
            <person name="Apweiler R."/>
            <person name="Aturaliya R.N."/>
            <person name="Bailey T.L."/>
            <person name="Bansal M."/>
            <person name="Baxter L."/>
            <person name="Beisel K.W."/>
            <person name="Bersano T."/>
            <person name="Bono H."/>
            <person name="Chalk A.M."/>
            <person name="Chiu K.P."/>
            <person name="Choudhary V."/>
            <person name="Christoffels A."/>
            <person name="Clutterbuck D.R."/>
            <person name="Crowe M.L."/>
            <person name="Dalla E."/>
            <person name="Dalrymple B.P."/>
            <person name="de Bono B."/>
            <person name="Della Gatta G."/>
            <person name="di Bernardo D."/>
            <person name="Down T."/>
            <person name="Engstrom P."/>
            <person name="Fagiolini M."/>
            <person name="Faulkner G."/>
            <person name="Fletcher C.F."/>
            <person name="Fukushima T."/>
            <person name="Furuno M."/>
            <person name="Futaki S."/>
            <person name="Gariboldi M."/>
            <person name="Georgii-Hemming P."/>
            <person name="Gingeras T.R."/>
            <person name="Gojobori T."/>
            <person name="Green R.E."/>
            <person name="Gustincich S."/>
            <person name="Harbers M."/>
            <person name="Hayashi Y."/>
            <person name="Hensch T.K."/>
            <person name="Hirokawa N."/>
            <person name="Hill D."/>
            <person name="Huminiecki L."/>
            <person name="Iacono M."/>
            <person name="Ikeo K."/>
            <person name="Iwama A."/>
            <person name="Ishikawa T."/>
            <person name="Jakt M."/>
            <person name="Kanapin A."/>
            <person name="Katoh M."/>
            <person name="Kawasawa Y."/>
            <person name="Kelso J."/>
            <person name="Kitamura H."/>
            <person name="Kitano H."/>
            <person name="Kollias G."/>
            <person name="Krishnan S.P."/>
            <person name="Kruger A."/>
            <person name="Kummerfeld S.K."/>
            <person name="Kurochkin I.V."/>
            <person name="Lareau L.F."/>
            <person name="Lazarevic D."/>
            <person name="Lipovich L."/>
            <person name="Liu J."/>
            <person name="Liuni S."/>
            <person name="McWilliam S."/>
            <person name="Madan Babu M."/>
            <person name="Madera M."/>
            <person name="Marchionni L."/>
            <person name="Matsuda H."/>
            <person name="Matsuzawa S."/>
            <person name="Miki H."/>
            <person name="Mignone F."/>
            <person name="Miyake S."/>
            <person name="Morris K."/>
            <person name="Mottagui-Tabar S."/>
            <person name="Mulder N."/>
            <person name="Nakano N."/>
            <person name="Nakauchi H."/>
            <person name="Ng P."/>
            <person name="Nilsson R."/>
            <person name="Nishiguchi S."/>
            <person name="Nishikawa S."/>
            <person name="Nori F."/>
            <person name="Ohara O."/>
            <person name="Okazaki Y."/>
            <person name="Orlando V."/>
            <person name="Pang K.C."/>
            <person name="Pavan W.J."/>
            <person name="Pavesi G."/>
            <person name="Pesole G."/>
            <person name="Petrovsky N."/>
            <person name="Piazza S."/>
            <person name="Reed J."/>
            <person name="Reid J.F."/>
            <person name="Ring B.Z."/>
            <person name="Ringwald M."/>
            <person name="Rost B."/>
            <person name="Ruan Y."/>
            <person name="Salzberg S.L."/>
            <person name="Sandelin A."/>
            <person name="Schneider C."/>
            <person name="Schoenbach C."/>
            <person name="Sekiguchi K."/>
            <person name="Semple C.A."/>
            <person name="Seno S."/>
            <person name="Sessa L."/>
            <person name="Sheng Y."/>
            <person name="Shibata Y."/>
            <person name="Shimada H."/>
            <person name="Shimada K."/>
            <person name="Silva D."/>
            <person name="Sinclair B."/>
            <person name="Sperling S."/>
            <person name="Stupka E."/>
            <person name="Sugiura K."/>
            <person name="Sultana R."/>
            <person name="Takenaka Y."/>
            <person name="Taki K."/>
            <person name="Tammoja K."/>
            <person name="Tan S.L."/>
            <person name="Tang S."/>
            <person name="Taylor M.S."/>
            <person name="Tegner J."/>
            <person name="Teichmann S.A."/>
            <person name="Ueda H.R."/>
            <person name="van Nimwegen E."/>
            <person name="Verardo R."/>
            <person name="Wei C.L."/>
            <person name="Yagi K."/>
            <person name="Yamanishi H."/>
            <person name="Zabarovsky E."/>
            <person name="Zhu S."/>
            <person name="Zimmer A."/>
            <person name="Hide W."/>
            <person name="Bult C."/>
            <person name="Grimmond S.M."/>
            <person name="Teasdale R.D."/>
            <person name="Liu E.T."/>
            <person name="Brusic V."/>
            <person name="Quackenbush J."/>
            <person name="Wahlestedt C."/>
            <person name="Mattick J.S."/>
            <person name="Hume D.A."/>
            <person name="Kai C."/>
            <person name="Sasaki D."/>
            <person name="Tomaru Y."/>
            <person name="Fukuda S."/>
            <person name="Kanamori-Katayama M."/>
            <person name="Suzuki M."/>
            <person name="Aoki J."/>
            <person name="Arakawa T."/>
            <person name="Iida J."/>
            <person name="Imamura K."/>
            <person name="Itoh M."/>
            <person name="Kato T."/>
            <person name="Kawaji H."/>
            <person name="Kawagashira N."/>
            <person name="Kawashima T."/>
            <person name="Kojima M."/>
            <person name="Kondo S."/>
            <person name="Konno H."/>
            <person name="Nakano K."/>
            <person name="Ninomiya N."/>
            <person name="Nishio T."/>
            <person name="Okada M."/>
            <person name="Plessy C."/>
            <person name="Shibata K."/>
            <person name="Shiraki T."/>
            <person name="Suzuki S."/>
            <person name="Tagami M."/>
            <person name="Waki K."/>
            <person name="Watahiki A."/>
            <person name="Okamura-Oho Y."/>
            <person name="Suzuki H."/>
            <person name="Kawai J."/>
            <person name="Hayashizaki Y."/>
        </authorList>
    </citation>
    <scope>NUCLEOTIDE SEQUENCE [LARGE SCALE MRNA]</scope>
    <source>
        <strain>C57BL/6J</strain>
        <tissue>Embryo</tissue>
    </source>
</reference>
<reference key="3">
    <citation type="journal article" date="2003" name="Mol. Pharmacol.">
        <title>Cytoplasmic accumulation of the nuclear receptor CAR by a tetratricopeptide repeat protein in HepG2 cells.</title>
        <authorList>
            <person name="Kobayashi K."/>
            <person name="Sueyoshi T."/>
            <person name="Inoue K."/>
            <person name="Moore R."/>
            <person name="Negishi M."/>
        </authorList>
    </citation>
    <scope>NUCLEOTIDE SEQUENCE [MRNA]</scope>
    <scope>INTERACTION WITH NR1I3 AND HSP90</scope>
    <scope>SUBCELLULAR LOCATION</scope>
    <scope>TISSUE SPECIFICITY</scope>
</reference>
<reference key="4">
    <citation type="journal article" date="2004" name="Genome Res.">
        <title>The status, quality, and expansion of the NIH full-length cDNA project: the Mammalian Gene Collection (MGC).</title>
        <authorList>
            <consortium name="The MGC Project Team"/>
        </authorList>
    </citation>
    <scope>NUCLEOTIDE SEQUENCE [LARGE SCALE MRNA]</scope>
    <source>
        <strain>C57BL/6J</strain>
        <strain>FVB/N</strain>
        <tissue>Brain</tissue>
    </source>
</reference>
<reference key="5">
    <citation type="journal article" date="2010" name="Cell">
        <title>A tissue-specific atlas of mouse protein phosphorylation and expression.</title>
        <authorList>
            <person name="Huttlin E.L."/>
            <person name="Jedrychowski M.P."/>
            <person name="Elias J.E."/>
            <person name="Goswami T."/>
            <person name="Rad R."/>
            <person name="Beausoleil S.A."/>
            <person name="Villen J."/>
            <person name="Haas W."/>
            <person name="Sowa M.E."/>
            <person name="Gygi S.P."/>
        </authorList>
    </citation>
    <scope>IDENTIFICATION BY MASS SPECTROMETRY [LARGE SCALE ANALYSIS]</scope>
    <source>
        <tissue>Brain</tissue>
        <tissue>Brown adipose tissue</tissue>
        <tissue>Heart</tissue>
        <tissue>Kidney</tissue>
        <tissue>Liver</tissue>
        <tissue>Lung</tissue>
        <tissue>Pancreas</tissue>
        <tissue>Spleen</tissue>
        <tissue>Testis</tissue>
    </source>
</reference>
<feature type="initiator methionine" description="Removed" evidence="2">
    <location>
        <position position="1"/>
    </location>
</feature>
<feature type="chain" id="PRO_0000071059" description="DnaJ homolog subfamily C member 7">
    <location>
        <begin position="2"/>
        <end position="494"/>
    </location>
</feature>
<feature type="repeat" description="TPR 1">
    <location>
        <begin position="28"/>
        <end position="61"/>
    </location>
</feature>
<feature type="repeat" description="TPR 2">
    <location>
        <begin position="62"/>
        <end position="95"/>
    </location>
</feature>
<feature type="repeat" description="TPR 3">
    <location>
        <begin position="96"/>
        <end position="129"/>
    </location>
</feature>
<feature type="repeat" description="TPR 4">
    <location>
        <begin position="142"/>
        <end position="175"/>
    </location>
</feature>
<feature type="repeat" description="TPR 5">
    <location>
        <begin position="210"/>
        <end position="243"/>
    </location>
</feature>
<feature type="repeat" description="TPR 6">
    <location>
        <begin position="256"/>
        <end position="289"/>
    </location>
</feature>
<feature type="repeat" description="TPR 7">
    <location>
        <begin position="294"/>
        <end position="327"/>
    </location>
</feature>
<feature type="repeat" description="TPR 8">
    <location>
        <begin position="328"/>
        <end position="361"/>
    </location>
</feature>
<feature type="domain" description="J" evidence="3">
    <location>
        <begin position="381"/>
        <end position="451"/>
    </location>
</feature>
<feature type="modified residue" description="N-acetylalanine" evidence="2">
    <location>
        <position position="2"/>
    </location>
</feature>
<feature type="modified residue" description="Phosphoserine" evidence="2">
    <location>
        <position position="393"/>
    </location>
</feature>
<feature type="sequence conflict" description="In Ref. 2; BAB27893." evidence="5" ref="2">
    <original>QQ</original>
    <variation>HE</variation>
    <location>
        <begin position="86"/>
        <end position="87"/>
    </location>
</feature>
<feature type="sequence conflict" description="In Ref. 1; BAA88309." evidence="5" ref="1">
    <original>S</original>
    <variation>I</variation>
    <location>
        <position position="118"/>
    </location>
</feature>
<feature type="sequence conflict" description="In Ref. 3; AAQ91291." evidence="5" ref="3">
    <original>F</original>
    <variation>L</variation>
    <location>
        <position position="136"/>
    </location>
</feature>
<feature type="sequence conflict" description="In Ref. 2; BAC36133." evidence="5" ref="2">
    <original>Y</original>
    <variation>F</variation>
    <location>
        <position position="192"/>
    </location>
</feature>
<feature type="sequence conflict" description="In Ref. 2; BAB27893." evidence="5" ref="2">
    <original>I</original>
    <variation>V</variation>
    <location>
        <position position="285"/>
    </location>
</feature>
<feature type="sequence conflict" description="In Ref. 1; BAA88309 and 3; AAQ91291." evidence="5" ref="1 3">
    <original>F</original>
    <variation>L</variation>
    <location>
        <position position="489"/>
    </location>
</feature>
<protein>
    <recommendedName>
        <fullName>DnaJ homolog subfamily C member 7</fullName>
    </recommendedName>
    <alternativeName>
        <fullName>Cytoplasmic CAR retention protein</fullName>
        <shortName>CCRP</shortName>
    </alternativeName>
    <alternativeName>
        <fullName>MDj11</fullName>
    </alternativeName>
    <alternativeName>
        <fullName>Tetratricopeptide repeat protein 2</fullName>
        <shortName>TPR repeat protein 2</shortName>
    </alternativeName>
</protein>